<accession>Q31C53</accession>
<evidence type="ECO:0000255" key="1">
    <source>
        <dbReference type="HAMAP-Rule" id="MF_00632"/>
    </source>
</evidence>
<gene>
    <name type="ordered locus">PMT9312_0481</name>
</gene>
<organism>
    <name type="scientific">Prochlorococcus marinus (strain MIT 9312)</name>
    <dbReference type="NCBI Taxonomy" id="74546"/>
    <lineage>
        <taxon>Bacteria</taxon>
        <taxon>Bacillati</taxon>
        <taxon>Cyanobacteriota</taxon>
        <taxon>Cyanophyceae</taxon>
        <taxon>Synechococcales</taxon>
        <taxon>Prochlorococcaceae</taxon>
        <taxon>Prochlorococcus</taxon>
    </lineage>
</organism>
<keyword id="KW-0547">Nucleotide-binding</keyword>
<feature type="chain" id="PRO_1000147316" description="Nucleotide-binding protein PMT9312_0481">
    <location>
        <begin position="1"/>
        <end position="165"/>
    </location>
</feature>
<protein>
    <recommendedName>
        <fullName evidence="1">Nucleotide-binding protein PMT9312_0481</fullName>
    </recommendedName>
</protein>
<proteinExistence type="inferred from homology"/>
<reference key="1">
    <citation type="journal article" date="2006" name="Science">
        <title>Genomic islands and the ecology and evolution of Prochlorococcus.</title>
        <authorList>
            <person name="Coleman M.L."/>
            <person name="Sullivan M.B."/>
            <person name="Martiny A.C."/>
            <person name="Steglich C."/>
            <person name="Barry K."/>
            <person name="Delong E.F."/>
            <person name="Chisholm S.W."/>
        </authorList>
    </citation>
    <scope>NUCLEOTIDE SEQUENCE [LARGE SCALE GENOMIC DNA]</scope>
    <source>
        <strain>MIT 9312</strain>
    </source>
</reference>
<dbReference type="EMBL" id="CP000111">
    <property type="protein sequence ID" value="ABB49542.1"/>
    <property type="molecule type" value="Genomic_DNA"/>
</dbReference>
<dbReference type="RefSeq" id="WP_011376040.1">
    <property type="nucleotide sequence ID" value="NC_007577.1"/>
</dbReference>
<dbReference type="SMR" id="Q31C53"/>
<dbReference type="STRING" id="74546.PMT9312_0481"/>
<dbReference type="KEGG" id="pmi:PMT9312_0481"/>
<dbReference type="eggNOG" id="COG1666">
    <property type="taxonomic scope" value="Bacteria"/>
</dbReference>
<dbReference type="HOGENOM" id="CLU_099839_0_0_3"/>
<dbReference type="OrthoDB" id="9801447at2"/>
<dbReference type="Proteomes" id="UP000002715">
    <property type="component" value="Chromosome"/>
</dbReference>
<dbReference type="GO" id="GO:0005829">
    <property type="term" value="C:cytosol"/>
    <property type="evidence" value="ECO:0007669"/>
    <property type="project" value="TreeGrafter"/>
</dbReference>
<dbReference type="GO" id="GO:0000166">
    <property type="term" value="F:nucleotide binding"/>
    <property type="evidence" value="ECO:0007669"/>
    <property type="project" value="TreeGrafter"/>
</dbReference>
<dbReference type="CDD" id="cd11740">
    <property type="entry name" value="YajQ_like"/>
    <property type="match status" value="1"/>
</dbReference>
<dbReference type="Gene3D" id="3.30.70.860">
    <property type="match status" value="1"/>
</dbReference>
<dbReference type="Gene3D" id="3.30.70.990">
    <property type="entry name" value="YajQ-like, domain 2"/>
    <property type="match status" value="1"/>
</dbReference>
<dbReference type="HAMAP" id="MF_00632">
    <property type="entry name" value="YajQ"/>
    <property type="match status" value="1"/>
</dbReference>
<dbReference type="InterPro" id="IPR007551">
    <property type="entry name" value="DUF520"/>
</dbReference>
<dbReference type="InterPro" id="IPR035571">
    <property type="entry name" value="UPF0234-like_C"/>
</dbReference>
<dbReference type="InterPro" id="IPR035570">
    <property type="entry name" value="UPF0234_N"/>
</dbReference>
<dbReference type="InterPro" id="IPR036183">
    <property type="entry name" value="YajQ-like_sf"/>
</dbReference>
<dbReference type="NCBIfam" id="NF003819">
    <property type="entry name" value="PRK05412.1"/>
    <property type="match status" value="1"/>
</dbReference>
<dbReference type="PANTHER" id="PTHR30476">
    <property type="entry name" value="UPF0234 PROTEIN YAJQ"/>
    <property type="match status" value="1"/>
</dbReference>
<dbReference type="PANTHER" id="PTHR30476:SF0">
    <property type="entry name" value="UPF0234 PROTEIN YAJQ"/>
    <property type="match status" value="1"/>
</dbReference>
<dbReference type="Pfam" id="PF04461">
    <property type="entry name" value="DUF520"/>
    <property type="match status" value="1"/>
</dbReference>
<dbReference type="SUPFAM" id="SSF89963">
    <property type="entry name" value="YajQ-like"/>
    <property type="match status" value="2"/>
</dbReference>
<comment type="function">
    <text evidence="1">Nucleotide-binding protein.</text>
</comment>
<comment type="similarity">
    <text evidence="1">Belongs to the YajQ family.</text>
</comment>
<name>Y481_PROM9</name>
<sequence length="165" mass="18877">MAESFSFDVVSDFERQELVNTLDQVKREISQRYDLKGTDTVVDLDKENIFITTNSELTLNSVNDIIRQKAIKRNLSLKIFDYGEIETVSGNKLKQTILLKQGIKQEIAKKISKSIRDQFKKINVSINGETLRVSSKSKNDLQLAIKLISQLEESLNIPLKANNFR</sequence>